<name>TRPD_CALMQ</name>
<organism>
    <name type="scientific">Caldivirga maquilingensis (strain ATCC 700844 / DSM 13496 / JCM 10307 / IC-167)</name>
    <dbReference type="NCBI Taxonomy" id="397948"/>
    <lineage>
        <taxon>Archaea</taxon>
        <taxon>Thermoproteota</taxon>
        <taxon>Thermoprotei</taxon>
        <taxon>Thermoproteales</taxon>
        <taxon>Thermoproteaceae</taxon>
        <taxon>Caldivirga</taxon>
    </lineage>
</organism>
<gene>
    <name evidence="1" type="primary">trpD</name>
    <name type="ordered locus">Cmaq_1045</name>
</gene>
<evidence type="ECO:0000255" key="1">
    <source>
        <dbReference type="HAMAP-Rule" id="MF_00211"/>
    </source>
</evidence>
<dbReference type="EC" id="2.4.2.18" evidence="1"/>
<dbReference type="EMBL" id="CP000852">
    <property type="protein sequence ID" value="ABW01874.1"/>
    <property type="molecule type" value="Genomic_DNA"/>
</dbReference>
<dbReference type="RefSeq" id="WP_012186093.1">
    <property type="nucleotide sequence ID" value="NC_009954.1"/>
</dbReference>
<dbReference type="SMR" id="A8MDL8"/>
<dbReference type="STRING" id="397948.Cmaq_1045"/>
<dbReference type="GeneID" id="5710181"/>
<dbReference type="KEGG" id="cma:Cmaq_1045"/>
<dbReference type="eggNOG" id="arCOG02012">
    <property type="taxonomic scope" value="Archaea"/>
</dbReference>
<dbReference type="HOGENOM" id="CLU_034315_2_1_2"/>
<dbReference type="OrthoDB" id="8214at2157"/>
<dbReference type="UniPathway" id="UPA00035">
    <property type="reaction ID" value="UER00041"/>
</dbReference>
<dbReference type="Proteomes" id="UP000001137">
    <property type="component" value="Chromosome"/>
</dbReference>
<dbReference type="GO" id="GO:0005829">
    <property type="term" value="C:cytosol"/>
    <property type="evidence" value="ECO:0007669"/>
    <property type="project" value="TreeGrafter"/>
</dbReference>
<dbReference type="GO" id="GO:0004048">
    <property type="term" value="F:anthranilate phosphoribosyltransferase activity"/>
    <property type="evidence" value="ECO:0007669"/>
    <property type="project" value="UniProtKB-UniRule"/>
</dbReference>
<dbReference type="GO" id="GO:0000287">
    <property type="term" value="F:magnesium ion binding"/>
    <property type="evidence" value="ECO:0007669"/>
    <property type="project" value="UniProtKB-UniRule"/>
</dbReference>
<dbReference type="GO" id="GO:0000162">
    <property type="term" value="P:L-tryptophan biosynthetic process"/>
    <property type="evidence" value="ECO:0007669"/>
    <property type="project" value="UniProtKB-UniRule"/>
</dbReference>
<dbReference type="Gene3D" id="3.40.1030.10">
    <property type="entry name" value="Nucleoside phosphorylase/phosphoribosyltransferase catalytic domain"/>
    <property type="match status" value="1"/>
</dbReference>
<dbReference type="Gene3D" id="1.20.970.10">
    <property type="entry name" value="Transferase, Pyrimidine Nucleoside Phosphorylase, Chain C"/>
    <property type="match status" value="1"/>
</dbReference>
<dbReference type="HAMAP" id="MF_00211">
    <property type="entry name" value="TrpD"/>
    <property type="match status" value="1"/>
</dbReference>
<dbReference type="InterPro" id="IPR005940">
    <property type="entry name" value="Anthranilate_Pribosyl_Tfrase"/>
</dbReference>
<dbReference type="InterPro" id="IPR000312">
    <property type="entry name" value="Glycosyl_Trfase_fam3"/>
</dbReference>
<dbReference type="InterPro" id="IPR017459">
    <property type="entry name" value="Glycosyl_Trfase_fam3_N_dom"/>
</dbReference>
<dbReference type="InterPro" id="IPR036320">
    <property type="entry name" value="Glycosyl_Trfase_fam3_N_dom_sf"/>
</dbReference>
<dbReference type="InterPro" id="IPR035902">
    <property type="entry name" value="Nuc_phospho_transferase"/>
</dbReference>
<dbReference type="NCBIfam" id="TIGR01245">
    <property type="entry name" value="trpD"/>
    <property type="match status" value="1"/>
</dbReference>
<dbReference type="PANTHER" id="PTHR43285">
    <property type="entry name" value="ANTHRANILATE PHOSPHORIBOSYLTRANSFERASE"/>
    <property type="match status" value="1"/>
</dbReference>
<dbReference type="PANTHER" id="PTHR43285:SF2">
    <property type="entry name" value="ANTHRANILATE PHOSPHORIBOSYLTRANSFERASE"/>
    <property type="match status" value="1"/>
</dbReference>
<dbReference type="Pfam" id="PF02885">
    <property type="entry name" value="Glycos_trans_3N"/>
    <property type="match status" value="1"/>
</dbReference>
<dbReference type="Pfam" id="PF00591">
    <property type="entry name" value="Glycos_transf_3"/>
    <property type="match status" value="1"/>
</dbReference>
<dbReference type="SUPFAM" id="SSF52418">
    <property type="entry name" value="Nucleoside phosphorylase/phosphoribosyltransferase catalytic domain"/>
    <property type="match status" value="1"/>
</dbReference>
<dbReference type="SUPFAM" id="SSF47648">
    <property type="entry name" value="Nucleoside phosphorylase/phosphoribosyltransferase N-terminal domain"/>
    <property type="match status" value="1"/>
</dbReference>
<reference key="1">
    <citation type="submission" date="2007-10" db="EMBL/GenBank/DDBJ databases">
        <title>Complete sequence of Caldivirga maquilingensis IC-167.</title>
        <authorList>
            <consortium name="US DOE Joint Genome Institute"/>
            <person name="Copeland A."/>
            <person name="Lucas S."/>
            <person name="Lapidus A."/>
            <person name="Barry K."/>
            <person name="Glavina del Rio T."/>
            <person name="Dalin E."/>
            <person name="Tice H."/>
            <person name="Pitluck S."/>
            <person name="Saunders E."/>
            <person name="Brettin T."/>
            <person name="Bruce D."/>
            <person name="Detter J.C."/>
            <person name="Han C."/>
            <person name="Schmutz J."/>
            <person name="Larimer F."/>
            <person name="Land M."/>
            <person name="Hauser L."/>
            <person name="Kyrpides N."/>
            <person name="Ivanova N."/>
            <person name="Biddle J.F."/>
            <person name="Zhang Z."/>
            <person name="Fitz-Gibbon S.T."/>
            <person name="Lowe T.M."/>
            <person name="Saltikov C."/>
            <person name="House C.H."/>
            <person name="Richardson P."/>
        </authorList>
    </citation>
    <scope>NUCLEOTIDE SEQUENCE [LARGE SCALE GENOMIC DNA]</scope>
    <source>
        <strain>ATCC 700844 / DSM 13496 / JCM 10307 / IC-167</strain>
    </source>
</reference>
<accession>A8MDL8</accession>
<protein>
    <recommendedName>
        <fullName evidence="1">Anthranilate phosphoribosyltransferase</fullName>
        <ecNumber evidence="1">2.4.2.18</ecNumber>
    </recommendedName>
</protein>
<sequence>MRPLLEKIARGLELSLEEAYNAALAILKMEAGEAETAALLMGLRVRGERAFEVAGFAKALRETCLRIPVNDPYVIDTAGTGGDGLRTMNVSTISALLAAYLGVKVLKHGNRSVSSSSGSADFLEALGFNISVKPETALLMLNNHRFSFAFAPMYHPAMKNVMPVRRRLGIRTIFNLVGPLANPGLVRRQVLGVAEAGIMGVMAEAAGLIGYDHLLLVHGEPGIDEVSVFGRTMIYEVKGNSIDKYVIEPPELGLRIHELRDVVVSNPMESIEKAKRGLMGVDEAALDFIAANTAMALYVAGKVKDPRDGVEAVKQIAGNSNDFWSYVNNVAAVSRRDSA</sequence>
<proteinExistence type="inferred from homology"/>
<comment type="function">
    <text evidence="1">Catalyzes the transfer of the phosphoribosyl group of 5-phosphorylribose-1-pyrophosphate (PRPP) to anthranilate to yield N-(5'-phosphoribosyl)-anthranilate (PRA).</text>
</comment>
<comment type="catalytic activity">
    <reaction evidence="1">
        <text>N-(5-phospho-beta-D-ribosyl)anthranilate + diphosphate = 5-phospho-alpha-D-ribose 1-diphosphate + anthranilate</text>
        <dbReference type="Rhea" id="RHEA:11768"/>
        <dbReference type="ChEBI" id="CHEBI:16567"/>
        <dbReference type="ChEBI" id="CHEBI:18277"/>
        <dbReference type="ChEBI" id="CHEBI:33019"/>
        <dbReference type="ChEBI" id="CHEBI:58017"/>
        <dbReference type="EC" id="2.4.2.18"/>
    </reaction>
</comment>
<comment type="cofactor">
    <cofactor evidence="1">
        <name>Mg(2+)</name>
        <dbReference type="ChEBI" id="CHEBI:18420"/>
    </cofactor>
    <text evidence="1">Binds 2 magnesium ions per monomer.</text>
</comment>
<comment type="pathway">
    <text evidence="1">Amino-acid biosynthesis; L-tryptophan biosynthesis; L-tryptophan from chorismate: step 2/5.</text>
</comment>
<comment type="subunit">
    <text evidence="1">Homodimer.</text>
</comment>
<comment type="similarity">
    <text evidence="1">Belongs to the anthranilate phosphoribosyltransferase family.</text>
</comment>
<feature type="chain" id="PRO_1000078007" description="Anthranilate phosphoribosyltransferase">
    <location>
        <begin position="1"/>
        <end position="339"/>
    </location>
</feature>
<feature type="binding site" evidence="1">
    <location>
        <position position="79"/>
    </location>
    <ligand>
        <name>5-phospho-alpha-D-ribose 1-diphosphate</name>
        <dbReference type="ChEBI" id="CHEBI:58017"/>
    </ligand>
</feature>
<feature type="binding site" evidence="1">
    <location>
        <position position="79"/>
    </location>
    <ligand>
        <name>anthranilate</name>
        <dbReference type="ChEBI" id="CHEBI:16567"/>
        <label>1</label>
    </ligand>
</feature>
<feature type="binding site" evidence="1">
    <location>
        <begin position="82"/>
        <end position="83"/>
    </location>
    <ligand>
        <name>5-phospho-alpha-D-ribose 1-diphosphate</name>
        <dbReference type="ChEBI" id="CHEBI:58017"/>
    </ligand>
</feature>
<feature type="binding site" evidence="1">
    <location>
        <position position="87"/>
    </location>
    <ligand>
        <name>5-phospho-alpha-D-ribose 1-diphosphate</name>
        <dbReference type="ChEBI" id="CHEBI:58017"/>
    </ligand>
</feature>
<feature type="binding site" evidence="1">
    <location>
        <begin position="89"/>
        <end position="92"/>
    </location>
    <ligand>
        <name>5-phospho-alpha-D-ribose 1-diphosphate</name>
        <dbReference type="ChEBI" id="CHEBI:58017"/>
    </ligand>
</feature>
<feature type="binding site" evidence="1">
    <location>
        <position position="91"/>
    </location>
    <ligand>
        <name>Mg(2+)</name>
        <dbReference type="ChEBI" id="CHEBI:18420"/>
        <label>1</label>
    </ligand>
</feature>
<feature type="binding site" evidence="1">
    <location>
        <begin position="107"/>
        <end position="115"/>
    </location>
    <ligand>
        <name>5-phospho-alpha-D-ribose 1-diphosphate</name>
        <dbReference type="ChEBI" id="CHEBI:58017"/>
    </ligand>
</feature>
<feature type="binding site" evidence="1">
    <location>
        <position position="110"/>
    </location>
    <ligand>
        <name>anthranilate</name>
        <dbReference type="ChEBI" id="CHEBI:16567"/>
        <label>1</label>
    </ligand>
</feature>
<feature type="binding site" evidence="1">
    <location>
        <position position="119"/>
    </location>
    <ligand>
        <name>5-phospho-alpha-D-ribose 1-diphosphate</name>
        <dbReference type="ChEBI" id="CHEBI:58017"/>
    </ligand>
</feature>
<feature type="binding site" evidence="1">
    <location>
        <position position="165"/>
    </location>
    <ligand>
        <name>anthranilate</name>
        <dbReference type="ChEBI" id="CHEBI:16567"/>
        <label>2</label>
    </ligand>
</feature>
<feature type="binding site" evidence="1">
    <location>
        <position position="224"/>
    </location>
    <ligand>
        <name>Mg(2+)</name>
        <dbReference type="ChEBI" id="CHEBI:18420"/>
        <label>2</label>
    </ligand>
</feature>
<feature type="binding site" evidence="1">
    <location>
        <position position="225"/>
    </location>
    <ligand>
        <name>Mg(2+)</name>
        <dbReference type="ChEBI" id="CHEBI:18420"/>
        <label>1</label>
    </ligand>
</feature>
<feature type="binding site" evidence="1">
    <location>
        <position position="225"/>
    </location>
    <ligand>
        <name>Mg(2+)</name>
        <dbReference type="ChEBI" id="CHEBI:18420"/>
        <label>2</label>
    </ligand>
</feature>
<keyword id="KW-0028">Amino-acid biosynthesis</keyword>
<keyword id="KW-0057">Aromatic amino acid biosynthesis</keyword>
<keyword id="KW-0328">Glycosyltransferase</keyword>
<keyword id="KW-0460">Magnesium</keyword>
<keyword id="KW-0479">Metal-binding</keyword>
<keyword id="KW-1185">Reference proteome</keyword>
<keyword id="KW-0808">Transferase</keyword>
<keyword id="KW-0822">Tryptophan biosynthesis</keyword>